<sequence>MTINYPVGTHHGKTLKNNTLRTGKTTKKVLFGKRGMGLEDEINLANDYYLANRLAVVHKKPTPITIVKVDYPARSAAKITEAYFKQASTTDYNGVYQGKYIDFDAKETKNKTSFPLKNFHEHQISHLASILSQGGIGFVIIKFTSLNENYVYPASELIQQWQHLNGKQSISYQEIVDKSFVVPESLNPSLDYLTAVDKMLEALH</sequence>
<proteinExistence type="inferred from homology"/>
<reference key="1">
    <citation type="journal article" date="2006" name="Proc. Natl. Acad. Sci. U.S.A.">
        <title>Comparative genomics of the lactic acid bacteria.</title>
        <authorList>
            <person name="Makarova K.S."/>
            <person name="Slesarev A."/>
            <person name="Wolf Y.I."/>
            <person name="Sorokin A."/>
            <person name="Mirkin B."/>
            <person name="Koonin E.V."/>
            <person name="Pavlov A."/>
            <person name="Pavlova N."/>
            <person name="Karamychev V."/>
            <person name="Polouchine N."/>
            <person name="Shakhova V."/>
            <person name="Grigoriev I."/>
            <person name="Lou Y."/>
            <person name="Rohksar D."/>
            <person name="Lucas S."/>
            <person name="Huang K."/>
            <person name="Goodstein D.M."/>
            <person name="Hawkins T."/>
            <person name="Plengvidhya V."/>
            <person name="Welker D."/>
            <person name="Hughes J."/>
            <person name="Goh Y."/>
            <person name="Benson A."/>
            <person name="Baldwin K."/>
            <person name="Lee J.-H."/>
            <person name="Diaz-Muniz I."/>
            <person name="Dosti B."/>
            <person name="Smeianov V."/>
            <person name="Wechter W."/>
            <person name="Barabote R."/>
            <person name="Lorca G."/>
            <person name="Altermann E."/>
            <person name="Barrangou R."/>
            <person name="Ganesan B."/>
            <person name="Xie Y."/>
            <person name="Rawsthorne H."/>
            <person name="Tamir D."/>
            <person name="Parker C."/>
            <person name="Breidt F."/>
            <person name="Broadbent J.R."/>
            <person name="Hutkins R."/>
            <person name="O'Sullivan D."/>
            <person name="Steele J."/>
            <person name="Unlu G."/>
            <person name="Saier M.H. Jr."/>
            <person name="Klaenhammer T."/>
            <person name="Richardson P."/>
            <person name="Kozyavkin S."/>
            <person name="Weimer B.C."/>
            <person name="Mills D.A."/>
        </authorList>
    </citation>
    <scope>NUCLEOTIDE SEQUENCE [LARGE SCALE GENOMIC DNA]</scope>
    <source>
        <strain>ATCC 8293 / DSM 20343 / BCRC 11652 / CCM 1803 / JCM 6124 / NCDO 523 / NBRC 100496 / NCIMB 8023 / NCTC 12954 / NRRL B-1118 / 37Y</strain>
    </source>
</reference>
<organism>
    <name type="scientific">Leuconostoc mesenteroides subsp. mesenteroides (strain ATCC 8293 / DSM 20343 / BCRC 11652 / CCM 1803 / JCM 6124 / NCDO 523 / NBRC 100496 / NCIMB 8023 / NCTC 12954 / NRRL B-1118 / 37Y)</name>
    <dbReference type="NCBI Taxonomy" id="203120"/>
    <lineage>
        <taxon>Bacteria</taxon>
        <taxon>Bacillati</taxon>
        <taxon>Bacillota</taxon>
        <taxon>Bacilli</taxon>
        <taxon>Lactobacillales</taxon>
        <taxon>Lactobacillaceae</taxon>
        <taxon>Leuconostoc</taxon>
    </lineage>
</organism>
<dbReference type="EC" id="3.1.21.10" evidence="1"/>
<dbReference type="EMBL" id="CP000414">
    <property type="protein sequence ID" value="ABJ61762.1"/>
    <property type="molecule type" value="Genomic_DNA"/>
</dbReference>
<dbReference type="RefSeq" id="WP_011679457.1">
    <property type="nucleotide sequence ID" value="NC_008531.1"/>
</dbReference>
<dbReference type="SMR" id="Q03YG0"/>
<dbReference type="EnsemblBacteria" id="ABJ61762">
    <property type="protein sequence ID" value="ABJ61762"/>
    <property type="gene ID" value="LEUM_0650"/>
</dbReference>
<dbReference type="GeneID" id="29577753"/>
<dbReference type="KEGG" id="lme:LEUM_0650"/>
<dbReference type="eggNOG" id="COG3331">
    <property type="taxonomic scope" value="Bacteria"/>
</dbReference>
<dbReference type="HOGENOM" id="CLU_096340_0_0_9"/>
<dbReference type="Proteomes" id="UP000000362">
    <property type="component" value="Chromosome"/>
</dbReference>
<dbReference type="GO" id="GO:0005737">
    <property type="term" value="C:cytoplasm"/>
    <property type="evidence" value="ECO:0007669"/>
    <property type="project" value="UniProtKB-SubCell"/>
</dbReference>
<dbReference type="GO" id="GO:0004519">
    <property type="term" value="F:endonuclease activity"/>
    <property type="evidence" value="ECO:0007669"/>
    <property type="project" value="UniProtKB-UniRule"/>
</dbReference>
<dbReference type="GO" id="GO:0000287">
    <property type="term" value="F:magnesium ion binding"/>
    <property type="evidence" value="ECO:0007669"/>
    <property type="project" value="UniProtKB-UniRule"/>
</dbReference>
<dbReference type="GO" id="GO:0003676">
    <property type="term" value="F:nucleic acid binding"/>
    <property type="evidence" value="ECO:0007669"/>
    <property type="project" value="InterPro"/>
</dbReference>
<dbReference type="GO" id="GO:0007059">
    <property type="term" value="P:chromosome segregation"/>
    <property type="evidence" value="ECO:0007669"/>
    <property type="project" value="UniProtKB-UniRule"/>
</dbReference>
<dbReference type="GO" id="GO:0006310">
    <property type="term" value="P:DNA recombination"/>
    <property type="evidence" value="ECO:0007669"/>
    <property type="project" value="UniProtKB-UniRule"/>
</dbReference>
<dbReference type="GO" id="GO:0006281">
    <property type="term" value="P:DNA repair"/>
    <property type="evidence" value="ECO:0007669"/>
    <property type="project" value="UniProtKB-UniRule"/>
</dbReference>
<dbReference type="CDD" id="cd22354">
    <property type="entry name" value="RecU-like"/>
    <property type="match status" value="1"/>
</dbReference>
<dbReference type="Gene3D" id="3.40.1350.10">
    <property type="match status" value="1"/>
</dbReference>
<dbReference type="HAMAP" id="MF_00130">
    <property type="entry name" value="RecU"/>
    <property type="match status" value="1"/>
</dbReference>
<dbReference type="InterPro" id="IPR004612">
    <property type="entry name" value="Resolv_RecU"/>
</dbReference>
<dbReference type="InterPro" id="IPR011335">
    <property type="entry name" value="Restrct_endonuc-II-like"/>
</dbReference>
<dbReference type="InterPro" id="IPR011856">
    <property type="entry name" value="tRNA_endonuc-like_dom_sf"/>
</dbReference>
<dbReference type="NCBIfam" id="NF002584">
    <property type="entry name" value="PRK02234.1-5"/>
    <property type="match status" value="1"/>
</dbReference>
<dbReference type="NCBIfam" id="TIGR00648">
    <property type="entry name" value="recU"/>
    <property type="match status" value="1"/>
</dbReference>
<dbReference type="Pfam" id="PF03838">
    <property type="entry name" value="RecU"/>
    <property type="match status" value="1"/>
</dbReference>
<dbReference type="PIRSF" id="PIRSF037785">
    <property type="entry name" value="RecU"/>
    <property type="match status" value="1"/>
</dbReference>
<dbReference type="SUPFAM" id="SSF52980">
    <property type="entry name" value="Restriction endonuclease-like"/>
    <property type="match status" value="1"/>
</dbReference>
<accession>Q03YG0</accession>
<evidence type="ECO:0000255" key="1">
    <source>
        <dbReference type="HAMAP-Rule" id="MF_00130"/>
    </source>
</evidence>
<comment type="function">
    <text evidence="1">Endonuclease that resolves Holliday junction intermediates in genetic recombination. Cleaves mobile four-strand junctions by introducing symmetrical nicks in paired strands. Promotes annealing of linear ssDNA with homologous dsDNA. Required for DNA repair, homologous recombination and chromosome segregation.</text>
</comment>
<comment type="catalytic activity">
    <reaction evidence="1">
        <text>Endonucleolytic cleavage at a junction such as a reciprocal single-stranded crossover between two homologous DNA duplexes (Holliday junction).</text>
        <dbReference type="EC" id="3.1.21.10"/>
    </reaction>
</comment>
<comment type="cofactor">
    <cofactor evidence="1">
        <name>Mg(2+)</name>
        <dbReference type="ChEBI" id="CHEBI:18420"/>
    </cofactor>
    <text evidence="1">Binds 1 Mg(2+) ion per subunit.</text>
</comment>
<comment type="subcellular location">
    <subcellularLocation>
        <location evidence="1">Cytoplasm</location>
    </subcellularLocation>
</comment>
<comment type="similarity">
    <text evidence="1">Belongs to the RecU family.</text>
</comment>
<name>RECU_LEUMM</name>
<keyword id="KW-0963">Cytoplasm</keyword>
<keyword id="KW-0227">DNA damage</keyword>
<keyword id="KW-0233">DNA recombination</keyword>
<keyword id="KW-0234">DNA repair</keyword>
<keyword id="KW-0255">Endonuclease</keyword>
<keyword id="KW-0378">Hydrolase</keyword>
<keyword id="KW-0460">Magnesium</keyword>
<keyword id="KW-0479">Metal-binding</keyword>
<keyword id="KW-0540">Nuclease</keyword>
<keyword id="KW-1185">Reference proteome</keyword>
<gene>
    <name evidence="1" type="primary">recU</name>
    <name type="ordered locus">LEUM_0650</name>
</gene>
<protein>
    <recommendedName>
        <fullName evidence="1">Holliday junction resolvase RecU</fullName>
        <ecNumber evidence="1">3.1.21.10</ecNumber>
    </recommendedName>
    <alternativeName>
        <fullName evidence="1">Recombination protein U homolog</fullName>
    </alternativeName>
</protein>
<feature type="chain" id="PRO_1000016734" description="Holliday junction resolvase RecU">
    <location>
        <begin position="1"/>
        <end position="204"/>
    </location>
</feature>
<feature type="binding site" evidence="1">
    <location>
        <position position="89"/>
    </location>
    <ligand>
        <name>Mg(2+)</name>
        <dbReference type="ChEBI" id="CHEBI:18420"/>
    </ligand>
</feature>
<feature type="binding site" evidence="1">
    <location>
        <position position="91"/>
    </location>
    <ligand>
        <name>Mg(2+)</name>
        <dbReference type="ChEBI" id="CHEBI:18420"/>
    </ligand>
</feature>
<feature type="binding site" evidence="1">
    <location>
        <position position="104"/>
    </location>
    <ligand>
        <name>Mg(2+)</name>
        <dbReference type="ChEBI" id="CHEBI:18420"/>
    </ligand>
</feature>
<feature type="binding site" evidence="1">
    <location>
        <position position="123"/>
    </location>
    <ligand>
        <name>Mg(2+)</name>
        <dbReference type="ChEBI" id="CHEBI:18420"/>
    </ligand>
</feature>
<feature type="site" description="Transition state stabilizer" evidence="1">
    <location>
        <position position="106"/>
    </location>
</feature>